<protein>
    <recommendedName>
        <fullName evidence="1">Maturase K</fullName>
    </recommendedName>
    <alternativeName>
        <fullName evidence="1">Intron maturase</fullName>
    </alternativeName>
</protein>
<proteinExistence type="inferred from homology"/>
<sequence>MDEFQRYGNKHKSWQQCFLYPLFFREDLYTIAHDLYLDKSSSSEPTELSISNFFSFPTVKRLIRRIRQQNDSNSIGLFRNCDPNRFINRNRNSYSELVLEGLTVILEVSLAMQSKHFIEGMDGWKSIRSIHCIFTLMEDKFPYSNYVSDIRVPYSIHPEILVRTFRRWIRDAPSLHLLRSILHEWRNSFSAENLQKALVPPRENRRFSLFLWNSYVYECESFLVSLLKQFYHSRSLLYGSFPDRTHFDKKIKHIIIFPVKISTKRIWLLKYPFIYYVRYGERSLIALKGTHLQVKRCRYHLFNFWQYYFHLWSQPYRVCILELSKIYFYFLGHFLSFKMKTLVVRTKMLDDLLISDIIANEFNPIAPIRSILLYLTKERFCDISGQPISRLSWTNLSDDDILDRFDRMCRNLFHYYSGSINKDSLYHIKYILLLSCAKTLACKHKSTIRLVREEPGSELFTKSFSKEREFIYSSFSKTRSQRERIWNSDILQINPLANSYTINK</sequence>
<evidence type="ECO:0000255" key="1">
    <source>
        <dbReference type="HAMAP-Rule" id="MF_01390"/>
    </source>
</evidence>
<accession>Q9MVV8</accession>
<comment type="function">
    <text evidence="1">Usually encoded in the trnK tRNA gene intron. Probably assists in splicing its own and other chloroplast group II introns.</text>
</comment>
<comment type="subcellular location">
    <subcellularLocation>
        <location>Plastid</location>
        <location>Chloroplast</location>
    </subcellularLocation>
</comment>
<comment type="similarity">
    <text evidence="1">Belongs to the intron maturase 2 family. MatK subfamily.</text>
</comment>
<geneLocation type="chloroplast"/>
<reference key="1">
    <citation type="journal article" date="2000" name="Mol. Phylogenet. Evol.">
        <title>Phylogeny of taxaceae and Cephalotaxaceae genera inferred from chloroplast matK gene and nuclear rDNA ITS region.</title>
        <authorList>
            <person name="Cheng Y."/>
            <person name="Nicolson R.G."/>
            <person name="Tripp K."/>
            <person name="Chaw S."/>
        </authorList>
    </citation>
    <scope>NUCLEOTIDE SEQUENCE [GENOMIC DNA]</scope>
    <source>
        <tissue>Leaf</tissue>
    </source>
</reference>
<dbReference type="EMBL" id="AB023996">
    <property type="protein sequence ID" value="BAA86046.1"/>
    <property type="molecule type" value="Genomic_DNA"/>
</dbReference>
<dbReference type="GO" id="GO:0009507">
    <property type="term" value="C:chloroplast"/>
    <property type="evidence" value="ECO:0007669"/>
    <property type="project" value="UniProtKB-SubCell"/>
</dbReference>
<dbReference type="GO" id="GO:0003723">
    <property type="term" value="F:RNA binding"/>
    <property type="evidence" value="ECO:0007669"/>
    <property type="project" value="UniProtKB-KW"/>
</dbReference>
<dbReference type="GO" id="GO:0006397">
    <property type="term" value="P:mRNA processing"/>
    <property type="evidence" value="ECO:0007669"/>
    <property type="project" value="UniProtKB-KW"/>
</dbReference>
<dbReference type="GO" id="GO:0008380">
    <property type="term" value="P:RNA splicing"/>
    <property type="evidence" value="ECO:0007669"/>
    <property type="project" value="UniProtKB-UniRule"/>
</dbReference>
<dbReference type="GO" id="GO:0008033">
    <property type="term" value="P:tRNA processing"/>
    <property type="evidence" value="ECO:0007669"/>
    <property type="project" value="UniProtKB-KW"/>
</dbReference>
<dbReference type="HAMAP" id="MF_01390">
    <property type="entry name" value="MatK"/>
    <property type="match status" value="1"/>
</dbReference>
<dbReference type="InterPro" id="IPR024937">
    <property type="entry name" value="Domain_X"/>
</dbReference>
<dbReference type="InterPro" id="IPR002866">
    <property type="entry name" value="Maturase_MatK"/>
</dbReference>
<dbReference type="InterPro" id="IPR024942">
    <property type="entry name" value="Maturase_MatK_N"/>
</dbReference>
<dbReference type="PANTHER" id="PTHR34811">
    <property type="entry name" value="MATURASE K"/>
    <property type="match status" value="1"/>
</dbReference>
<dbReference type="PANTHER" id="PTHR34811:SF1">
    <property type="entry name" value="MATURASE K"/>
    <property type="match status" value="1"/>
</dbReference>
<dbReference type="Pfam" id="PF01348">
    <property type="entry name" value="Intron_maturas2"/>
    <property type="match status" value="1"/>
</dbReference>
<dbReference type="Pfam" id="PF01824">
    <property type="entry name" value="MatK_N"/>
    <property type="match status" value="1"/>
</dbReference>
<keyword id="KW-0150">Chloroplast</keyword>
<keyword id="KW-0507">mRNA processing</keyword>
<keyword id="KW-0934">Plastid</keyword>
<keyword id="KW-0694">RNA-binding</keyword>
<keyword id="KW-0819">tRNA processing</keyword>
<feature type="chain" id="PRO_0000143730" description="Maturase K">
    <location>
        <begin position="1"/>
        <end position="504"/>
    </location>
</feature>
<gene>
    <name evidence="1" type="primary">matK</name>
</gene>
<name>MATK_TAXBA</name>
<organism>
    <name type="scientific">Taxus baccata</name>
    <name type="common">English yew</name>
    <dbReference type="NCBI Taxonomy" id="25629"/>
    <lineage>
        <taxon>Eukaryota</taxon>
        <taxon>Viridiplantae</taxon>
        <taxon>Streptophyta</taxon>
        <taxon>Embryophyta</taxon>
        <taxon>Tracheophyta</taxon>
        <taxon>Spermatophyta</taxon>
        <taxon>Pinopsida</taxon>
        <taxon>Pinidae</taxon>
        <taxon>Conifers II</taxon>
        <taxon>Cupressales</taxon>
        <taxon>Taxaceae</taxon>
        <taxon>Taxus</taxon>
    </lineage>
</organism>